<name>RL19_PSEF5</name>
<organism>
    <name type="scientific">Pseudomonas fluorescens (strain ATCC BAA-477 / NRRL B-23932 / Pf-5)</name>
    <dbReference type="NCBI Taxonomy" id="220664"/>
    <lineage>
        <taxon>Bacteria</taxon>
        <taxon>Pseudomonadati</taxon>
        <taxon>Pseudomonadota</taxon>
        <taxon>Gammaproteobacteria</taxon>
        <taxon>Pseudomonadales</taxon>
        <taxon>Pseudomonadaceae</taxon>
        <taxon>Pseudomonas</taxon>
    </lineage>
</organism>
<dbReference type="EMBL" id="CP000076">
    <property type="protein sequence ID" value="AAY90384.1"/>
    <property type="molecule type" value="Genomic_DNA"/>
</dbReference>
<dbReference type="RefSeq" id="WP_009047143.1">
    <property type="nucleotide sequence ID" value="NC_004129.6"/>
</dbReference>
<dbReference type="SMR" id="Q4KHQ5"/>
<dbReference type="STRING" id="220664.PFL_1097"/>
<dbReference type="GeneID" id="93401669"/>
<dbReference type="KEGG" id="pfl:PFL_1097"/>
<dbReference type="eggNOG" id="COG0335">
    <property type="taxonomic scope" value="Bacteria"/>
</dbReference>
<dbReference type="HOGENOM" id="CLU_103507_1_0_6"/>
<dbReference type="Proteomes" id="UP000008540">
    <property type="component" value="Chromosome"/>
</dbReference>
<dbReference type="GO" id="GO:0022625">
    <property type="term" value="C:cytosolic large ribosomal subunit"/>
    <property type="evidence" value="ECO:0007669"/>
    <property type="project" value="TreeGrafter"/>
</dbReference>
<dbReference type="GO" id="GO:0003735">
    <property type="term" value="F:structural constituent of ribosome"/>
    <property type="evidence" value="ECO:0007669"/>
    <property type="project" value="InterPro"/>
</dbReference>
<dbReference type="GO" id="GO:0006412">
    <property type="term" value="P:translation"/>
    <property type="evidence" value="ECO:0007669"/>
    <property type="project" value="UniProtKB-UniRule"/>
</dbReference>
<dbReference type="FunFam" id="2.30.30.790:FF:000001">
    <property type="entry name" value="50S ribosomal protein L19"/>
    <property type="match status" value="1"/>
</dbReference>
<dbReference type="Gene3D" id="2.30.30.790">
    <property type="match status" value="1"/>
</dbReference>
<dbReference type="HAMAP" id="MF_00402">
    <property type="entry name" value="Ribosomal_bL19"/>
    <property type="match status" value="1"/>
</dbReference>
<dbReference type="InterPro" id="IPR001857">
    <property type="entry name" value="Ribosomal_bL19"/>
</dbReference>
<dbReference type="InterPro" id="IPR018257">
    <property type="entry name" value="Ribosomal_bL19_CS"/>
</dbReference>
<dbReference type="InterPro" id="IPR038657">
    <property type="entry name" value="Ribosomal_bL19_sf"/>
</dbReference>
<dbReference type="InterPro" id="IPR008991">
    <property type="entry name" value="Translation_prot_SH3-like_sf"/>
</dbReference>
<dbReference type="NCBIfam" id="TIGR01024">
    <property type="entry name" value="rplS_bact"/>
    <property type="match status" value="1"/>
</dbReference>
<dbReference type="PANTHER" id="PTHR15680:SF9">
    <property type="entry name" value="LARGE RIBOSOMAL SUBUNIT PROTEIN BL19M"/>
    <property type="match status" value="1"/>
</dbReference>
<dbReference type="PANTHER" id="PTHR15680">
    <property type="entry name" value="RIBOSOMAL PROTEIN L19"/>
    <property type="match status" value="1"/>
</dbReference>
<dbReference type="Pfam" id="PF01245">
    <property type="entry name" value="Ribosomal_L19"/>
    <property type="match status" value="1"/>
</dbReference>
<dbReference type="PIRSF" id="PIRSF002191">
    <property type="entry name" value="Ribosomal_L19"/>
    <property type="match status" value="1"/>
</dbReference>
<dbReference type="PRINTS" id="PR00061">
    <property type="entry name" value="RIBOSOMALL19"/>
</dbReference>
<dbReference type="SUPFAM" id="SSF50104">
    <property type="entry name" value="Translation proteins SH3-like domain"/>
    <property type="match status" value="1"/>
</dbReference>
<dbReference type="PROSITE" id="PS01015">
    <property type="entry name" value="RIBOSOMAL_L19"/>
    <property type="match status" value="1"/>
</dbReference>
<gene>
    <name evidence="1" type="primary">rplS</name>
    <name type="ordered locus">PFL_1097</name>
</gene>
<evidence type="ECO:0000255" key="1">
    <source>
        <dbReference type="HAMAP-Rule" id="MF_00402"/>
    </source>
</evidence>
<evidence type="ECO:0000305" key="2"/>
<reference key="1">
    <citation type="journal article" date="2005" name="Nat. Biotechnol.">
        <title>Complete genome sequence of the plant commensal Pseudomonas fluorescens Pf-5.</title>
        <authorList>
            <person name="Paulsen I.T."/>
            <person name="Press C.M."/>
            <person name="Ravel J."/>
            <person name="Kobayashi D.Y."/>
            <person name="Myers G.S.A."/>
            <person name="Mavrodi D.V."/>
            <person name="DeBoy R.T."/>
            <person name="Seshadri R."/>
            <person name="Ren Q."/>
            <person name="Madupu R."/>
            <person name="Dodson R.J."/>
            <person name="Durkin A.S."/>
            <person name="Brinkac L.M."/>
            <person name="Daugherty S.C."/>
            <person name="Sullivan S.A."/>
            <person name="Rosovitz M.J."/>
            <person name="Gwinn M.L."/>
            <person name="Zhou L."/>
            <person name="Schneider D.J."/>
            <person name="Cartinhour S.W."/>
            <person name="Nelson W.C."/>
            <person name="Weidman J."/>
            <person name="Watkins K."/>
            <person name="Tran K."/>
            <person name="Khouri H."/>
            <person name="Pierson E.A."/>
            <person name="Pierson L.S. III"/>
            <person name="Thomashow L.S."/>
            <person name="Loper J.E."/>
        </authorList>
    </citation>
    <scope>NUCLEOTIDE SEQUENCE [LARGE SCALE GENOMIC DNA]</scope>
    <source>
        <strain>ATCC BAA-477 / NRRL B-23932 / Pf-5</strain>
    </source>
</reference>
<feature type="chain" id="PRO_0000226862" description="Large ribosomal subunit protein bL19">
    <location>
        <begin position="1"/>
        <end position="116"/>
    </location>
</feature>
<comment type="function">
    <text evidence="1">This protein is located at the 30S-50S ribosomal subunit interface and may play a role in the structure and function of the aminoacyl-tRNA binding site.</text>
</comment>
<comment type="similarity">
    <text evidence="1">Belongs to the bacterial ribosomal protein bL19 family.</text>
</comment>
<protein>
    <recommendedName>
        <fullName evidence="1">Large ribosomal subunit protein bL19</fullName>
    </recommendedName>
    <alternativeName>
        <fullName evidence="2">50S ribosomal protein L19</fullName>
    </alternativeName>
</protein>
<sequence>MTNKIILALEAEQMTKEIPAFAPGDTIVVQVKVKEGDRSRLQAFEGVVIAKRNRGVNSAFTVRKISNGVGVERTFQTYSPQIDSMAVKRRGDVRKAKLYYLRDLSGKAARIKEKLA</sequence>
<keyword id="KW-0687">Ribonucleoprotein</keyword>
<keyword id="KW-0689">Ribosomal protein</keyword>
<proteinExistence type="inferred from homology"/>
<accession>Q4KHQ5</accession>